<feature type="chain" id="PRO_0000455069" description="2-oxoglutarate-dependent dioxygenase traH">
    <location>
        <begin position="1"/>
        <end position="327"/>
    </location>
</feature>
<feature type="domain" description="Fe2OG dioxygenase" evidence="3">
    <location>
        <begin position="183"/>
        <end position="290"/>
    </location>
</feature>
<feature type="binding site" evidence="3">
    <location>
        <position position="211"/>
    </location>
    <ligand>
        <name>Fe cation</name>
        <dbReference type="ChEBI" id="CHEBI:24875"/>
    </ligand>
</feature>
<feature type="binding site" evidence="3">
    <location>
        <position position="213"/>
    </location>
    <ligand>
        <name>Fe cation</name>
        <dbReference type="ChEBI" id="CHEBI:24875"/>
    </ligand>
</feature>
<feature type="binding site" evidence="3">
    <location>
        <position position="270"/>
    </location>
    <ligand>
        <name>Fe cation</name>
        <dbReference type="ChEBI" id="CHEBI:24875"/>
    </ligand>
</feature>
<feature type="binding site" evidence="3">
    <location>
        <position position="280"/>
    </location>
    <ligand>
        <name>2-oxoglutarate</name>
        <dbReference type="ChEBI" id="CHEBI:16810"/>
    </ligand>
</feature>
<sequence length="327" mass="37491">MSVDAAVVKNEDKYIPTIDLRDYFDAYSEEKRAKVIEQVRKACLEHGFFQVEGHGVPVESQRRMFAACKALFDLPLEKKRRISLYKYSWRRGYEGPGEQQANDPHHGDFERDAKEGFFVGKELPLDQVDFGKGPNVWPPDLAENDFHRPVMEYYEHARKVGFKVMELLAVSLGHPPSILKDFTTDAAMFLKLLRYPAHTWTDTRKFGSGQHTDYGGITILLQDPGQDGLEVWHEATQQWVELPALEDKFVINLGDMVQRWTGGKYKSTLHRVINKTGGERYAVPAFWHGDLDAKNPLDPNDTSDETVLEFIKKKFYKGYGLTDDTSL</sequence>
<accession>A0A481WQ18</accession>
<evidence type="ECO:0000250" key="1">
    <source>
        <dbReference type="UniProtKB" id="A0A0E0RXA7"/>
    </source>
</evidence>
<evidence type="ECO:0000250" key="2">
    <source>
        <dbReference type="UniProtKB" id="A0A161CKG1"/>
    </source>
</evidence>
<evidence type="ECO:0000255" key="3">
    <source>
        <dbReference type="PROSITE-ProRule" id="PRU00805"/>
    </source>
</evidence>
<evidence type="ECO:0000269" key="4">
    <source>
    </source>
</evidence>
<evidence type="ECO:0000269" key="5">
    <source>
    </source>
</evidence>
<evidence type="ECO:0000303" key="6">
    <source>
    </source>
</evidence>
<evidence type="ECO:0000305" key="7"/>
<evidence type="ECO:0000305" key="8">
    <source>
    </source>
</evidence>
<protein>
    <recommendedName>
        <fullName evidence="6">2-oxoglutarate-dependent dioxygenase traH</fullName>
        <ecNumber evidence="8">1.14.-.-</ecNumber>
    </recommendedName>
    <alternativeName>
        <fullName evidence="6">Terrestric acid biosynthesis cluster protein H</fullName>
    </alternativeName>
</protein>
<reference key="1">
    <citation type="journal article" date="2019" name="J. Am. Chem. Soc.">
        <title>Peniphenone and penilactone formation in Penicillium crustosum via 1,4-Michael additions of ortho-quinone methide from hydroxyclavatol to gamma-butyrolactones from Crustosic Acid.</title>
        <authorList>
            <person name="Fan J."/>
            <person name="Liao G."/>
            <person name="Kindinger F."/>
            <person name="Ludwig-Radtke L."/>
            <person name="Yin W.B."/>
            <person name="Li S.M."/>
        </authorList>
    </citation>
    <scope>NUCLEOTIDE SEQUENCE [GENOMIC DNA]</scope>
    <scope>FUNCTION</scope>
    <scope>DISRUPTION PHENOTYPE</scope>
    <scope>PATHWAY</scope>
    <source>
        <strain>PRB-2</strain>
    </source>
</reference>
<reference key="2">
    <citation type="journal article" date="2020" name="J. Org. Chem.">
        <title>Increasing Structural Diversity of Natural Products by Michael Addition with ortho-Quinone Methide as the Acceptor.</title>
        <authorList>
            <person name="Liao G."/>
            <person name="Fan J."/>
            <person name="Ludwig-Radtke L."/>
            <person name="Backhaus K."/>
            <person name="Li S.M."/>
        </authorList>
    </citation>
    <scope>FUNCTION</scope>
</reference>
<dbReference type="EC" id="1.14.-.-" evidence="8"/>
<dbReference type="EMBL" id="MK360919">
    <property type="protein sequence ID" value="QBK15056.1"/>
    <property type="molecule type" value="Genomic_DNA"/>
</dbReference>
<dbReference type="SMR" id="A0A481WQ18"/>
<dbReference type="GO" id="GO:0051213">
    <property type="term" value="F:dioxygenase activity"/>
    <property type="evidence" value="ECO:0007669"/>
    <property type="project" value="UniProtKB-KW"/>
</dbReference>
<dbReference type="GO" id="GO:0046872">
    <property type="term" value="F:metal ion binding"/>
    <property type="evidence" value="ECO:0007669"/>
    <property type="project" value="UniProtKB-KW"/>
</dbReference>
<dbReference type="GO" id="GO:0044283">
    <property type="term" value="P:small molecule biosynthetic process"/>
    <property type="evidence" value="ECO:0007669"/>
    <property type="project" value="UniProtKB-ARBA"/>
</dbReference>
<dbReference type="Gene3D" id="2.60.120.330">
    <property type="entry name" value="B-lactam Antibiotic, Isopenicillin N Synthase, Chain"/>
    <property type="match status" value="1"/>
</dbReference>
<dbReference type="InterPro" id="IPR026992">
    <property type="entry name" value="DIOX_N"/>
</dbReference>
<dbReference type="InterPro" id="IPR044861">
    <property type="entry name" value="IPNS-like_FE2OG_OXY"/>
</dbReference>
<dbReference type="InterPro" id="IPR027443">
    <property type="entry name" value="IPNS-like_sf"/>
</dbReference>
<dbReference type="InterPro" id="IPR050231">
    <property type="entry name" value="Iron_ascorbate_oxido_reductase"/>
</dbReference>
<dbReference type="InterPro" id="IPR005123">
    <property type="entry name" value="Oxoglu/Fe-dep_dioxygenase_dom"/>
</dbReference>
<dbReference type="PANTHER" id="PTHR47990">
    <property type="entry name" value="2-OXOGLUTARATE (2OG) AND FE(II)-DEPENDENT OXYGENASE SUPERFAMILY PROTEIN-RELATED"/>
    <property type="match status" value="1"/>
</dbReference>
<dbReference type="Pfam" id="PF03171">
    <property type="entry name" value="2OG-FeII_Oxy"/>
    <property type="match status" value="1"/>
</dbReference>
<dbReference type="Pfam" id="PF14226">
    <property type="entry name" value="DIOX_N"/>
    <property type="match status" value="1"/>
</dbReference>
<dbReference type="SUPFAM" id="SSF51197">
    <property type="entry name" value="Clavaminate synthase-like"/>
    <property type="match status" value="1"/>
</dbReference>
<dbReference type="PROSITE" id="PS51471">
    <property type="entry name" value="FE2OG_OXY"/>
    <property type="match status" value="1"/>
</dbReference>
<keyword id="KW-0223">Dioxygenase</keyword>
<keyword id="KW-0408">Iron</keyword>
<keyword id="KW-0479">Metal-binding</keyword>
<keyword id="KW-0560">Oxidoreductase</keyword>
<gene>
    <name evidence="6" type="primary">traH</name>
</gene>
<proteinExistence type="inferred from homology"/>
<name>TRAH_PENCR</name>
<comment type="function">
    <text evidence="1 2 4 5">2-oxoglutarate-dependent dioxygenase; part of the tra gene cluster that produces terrestric acid (PubMed:30811183). The clavatol biosynthesis cluster cla and the terrestric acid cluster tra are both involved in the production of peniphenones and penilactones (PubMed:30811183). The non-reducing PKS claF is responsible for the formation of clavatol from successive condensations of 3 malonyl-CoA units, presumably with a simple acetyl-CoA starter unit, and 2 methylation steps (PubMed:30811183). The esterase claE probably collaborates with claF by catalyzing the hydrolysis of ACP-bound acyl intermediates to free the ACP from stalled intermediates (By similarity). The clavatol oxidase claD then converts clavatol to hydroxyclavatol (PubMed:30811183). Spontaneous dehydration of hydroxyclavatol leads to the accumulation of the highly active ortho-quinone methide (PubMed:30811183, PubMed:31860310). On the other hand, the PKS-NRPS hybrid traA is involved in the formation of crustosic acid, with the help of traB and traD (PubMed:30811183). The polyketide synthase module (PKS) of traA is responsible for the synthesis of the polyketide backbone via the condensation of an acetyl-CoA starter unit with 3 malonyl-CoA units (PubMed:30811183). The downstream nonribosomal peptide synthetase (NRPS) module then amidates the carboxyl end of the polyketide with L-malic acid (PubMed:30811183). Because traA lacks a designated enoylreductase (ER) domain, the required activity is provided the enoyl reductase traG (By similarity). Crustosic acid undergoes decarboxylation and isomerization to the terrestric acid, catalyzed by the 2-oxoglutarate-dependent dioxygenase traH (PubMed:30811183). Both acids are further converted to the 2 gamma-butyrolactones (R)-5-methyltetronic acid and (S)-5-carboxylmethyltetronic acid, with involvement of the cytochrome P450 monooxygenase claJ (PubMed:30811183). Spontaneous addition of the methide to these gamma-butyrolactones leads to peniphenone D and penilactone D, which undergo again stereospecific attacking by methide to give penilactones A and B (PubMed:30811183, PubMed:31860310).</text>
</comment>
<comment type="cofactor">
    <cofactor evidence="3">
        <name>Fe(2+)</name>
        <dbReference type="ChEBI" id="CHEBI:29033"/>
    </cofactor>
    <text evidence="3">Binds 1 Fe(2+) ion per subunit.</text>
</comment>
<comment type="pathway">
    <text evidence="4">Secondary metabolite biosynthesis.</text>
</comment>
<comment type="disruption phenotype">
    <text evidence="4">Abolished the production of penilactone A, peniphenone D and terrestric acid.</text>
</comment>
<comment type="similarity">
    <text evidence="7">Belongs to the iron/ascorbate-dependent oxidoreductase family.</text>
</comment>
<organism>
    <name type="scientific">Penicillium crustosum</name>
    <name type="common">Blue mold fungus</name>
    <dbReference type="NCBI Taxonomy" id="36656"/>
    <lineage>
        <taxon>Eukaryota</taxon>
        <taxon>Fungi</taxon>
        <taxon>Dikarya</taxon>
        <taxon>Ascomycota</taxon>
        <taxon>Pezizomycotina</taxon>
        <taxon>Eurotiomycetes</taxon>
        <taxon>Eurotiomycetidae</taxon>
        <taxon>Eurotiales</taxon>
        <taxon>Aspergillaceae</taxon>
        <taxon>Penicillium</taxon>
    </lineage>
</organism>